<comment type="catalytic activity">
    <reaction evidence="1">
        <text>tRNA(Gly) + glycine + ATP = glycyl-tRNA(Gly) + AMP + diphosphate</text>
        <dbReference type="Rhea" id="RHEA:16013"/>
        <dbReference type="Rhea" id="RHEA-COMP:9664"/>
        <dbReference type="Rhea" id="RHEA-COMP:9683"/>
        <dbReference type="ChEBI" id="CHEBI:30616"/>
        <dbReference type="ChEBI" id="CHEBI:33019"/>
        <dbReference type="ChEBI" id="CHEBI:57305"/>
        <dbReference type="ChEBI" id="CHEBI:78442"/>
        <dbReference type="ChEBI" id="CHEBI:78522"/>
        <dbReference type="ChEBI" id="CHEBI:456215"/>
        <dbReference type="EC" id="6.1.1.14"/>
    </reaction>
</comment>
<comment type="subunit">
    <text evidence="1">Tetramer of two alpha and two beta subunits.</text>
</comment>
<comment type="subcellular location">
    <subcellularLocation>
        <location evidence="1">Cytoplasm</location>
    </subcellularLocation>
</comment>
<comment type="similarity">
    <text evidence="1">Belongs to the class-II aminoacyl-tRNA synthetase family.</text>
</comment>
<reference key="1">
    <citation type="submission" date="2009-01" db="EMBL/GenBank/DDBJ databases">
        <title>Complete sequence of Diaphorobacter sp. TPSY.</title>
        <authorList>
            <consortium name="US DOE Joint Genome Institute"/>
            <person name="Lucas S."/>
            <person name="Copeland A."/>
            <person name="Lapidus A."/>
            <person name="Glavina del Rio T."/>
            <person name="Tice H."/>
            <person name="Bruce D."/>
            <person name="Goodwin L."/>
            <person name="Pitluck S."/>
            <person name="Chertkov O."/>
            <person name="Brettin T."/>
            <person name="Detter J.C."/>
            <person name="Han C."/>
            <person name="Larimer F."/>
            <person name="Land M."/>
            <person name="Hauser L."/>
            <person name="Kyrpides N."/>
            <person name="Mikhailova N."/>
            <person name="Coates J.D."/>
        </authorList>
    </citation>
    <scope>NUCLEOTIDE SEQUENCE [LARGE SCALE GENOMIC DNA]</scope>
    <source>
        <strain>TPSY</strain>
    </source>
</reference>
<gene>
    <name evidence="1" type="primary">glyQ</name>
    <name type="ordered locus">Dtpsy_0543</name>
</gene>
<organism>
    <name type="scientific">Acidovorax ebreus (strain TPSY)</name>
    <name type="common">Diaphorobacter sp. (strain TPSY)</name>
    <dbReference type="NCBI Taxonomy" id="535289"/>
    <lineage>
        <taxon>Bacteria</taxon>
        <taxon>Pseudomonadati</taxon>
        <taxon>Pseudomonadota</taxon>
        <taxon>Betaproteobacteria</taxon>
        <taxon>Burkholderiales</taxon>
        <taxon>Comamonadaceae</taxon>
        <taxon>Diaphorobacter</taxon>
    </lineage>
</organism>
<protein>
    <recommendedName>
        <fullName evidence="1">Glycine--tRNA ligase alpha subunit</fullName>
        <ecNumber evidence="1">6.1.1.14</ecNumber>
    </recommendedName>
    <alternativeName>
        <fullName evidence="1">Glycyl-tRNA synthetase alpha subunit</fullName>
        <shortName evidence="1">GlyRS</shortName>
    </alternativeName>
</protein>
<proteinExistence type="inferred from homology"/>
<name>SYGA_ACIET</name>
<feature type="chain" id="PRO_1000125546" description="Glycine--tRNA ligase alpha subunit">
    <location>
        <begin position="1"/>
        <end position="317"/>
    </location>
</feature>
<keyword id="KW-0030">Aminoacyl-tRNA synthetase</keyword>
<keyword id="KW-0067">ATP-binding</keyword>
<keyword id="KW-0963">Cytoplasm</keyword>
<keyword id="KW-0436">Ligase</keyword>
<keyword id="KW-0547">Nucleotide-binding</keyword>
<keyword id="KW-0648">Protein biosynthesis</keyword>
<keyword id="KW-1185">Reference proteome</keyword>
<evidence type="ECO:0000255" key="1">
    <source>
        <dbReference type="HAMAP-Rule" id="MF_00254"/>
    </source>
</evidence>
<sequence>MLTFQQIILKLQSYWADQGCALLQPYDMEVGAGTSHTATFLRALGPEPWKAAYVQPSRRPKDGRYGENPNRLQHYYQYQVVLKPAPDNILELYLGSLEALGFDLKKNDIRFVEDDWENPTLGAWGLGWEVWLNGMEVTQFTYFQQVGGIDCKPATGEITYGLERLAMYLQGVDNVYNLTWTEGPNGAKLTYGDVYHQNEVEQSTYNFEHSDAEFLFTAFGAHEKQANHLMGEQLALPAYEQVLKAAHTFNLLDARGAISVTERAAYIGRIRNLARAVAKAYLDSRARLGFPMAPKAHADEVLAELAKAAEQQNKKAA</sequence>
<dbReference type="EC" id="6.1.1.14" evidence="1"/>
<dbReference type="EMBL" id="CP001392">
    <property type="protein sequence ID" value="ACM32023.1"/>
    <property type="molecule type" value="Genomic_DNA"/>
</dbReference>
<dbReference type="RefSeq" id="WP_011803986.1">
    <property type="nucleotide sequence ID" value="NC_011992.1"/>
</dbReference>
<dbReference type="SMR" id="B9MCM3"/>
<dbReference type="GeneID" id="84682944"/>
<dbReference type="KEGG" id="dia:Dtpsy_0543"/>
<dbReference type="eggNOG" id="COG0752">
    <property type="taxonomic scope" value="Bacteria"/>
</dbReference>
<dbReference type="HOGENOM" id="CLU_057066_1_0_4"/>
<dbReference type="Proteomes" id="UP000000450">
    <property type="component" value="Chromosome"/>
</dbReference>
<dbReference type="GO" id="GO:0005829">
    <property type="term" value="C:cytosol"/>
    <property type="evidence" value="ECO:0007669"/>
    <property type="project" value="TreeGrafter"/>
</dbReference>
<dbReference type="GO" id="GO:0005524">
    <property type="term" value="F:ATP binding"/>
    <property type="evidence" value="ECO:0007669"/>
    <property type="project" value="UniProtKB-UniRule"/>
</dbReference>
<dbReference type="GO" id="GO:0004820">
    <property type="term" value="F:glycine-tRNA ligase activity"/>
    <property type="evidence" value="ECO:0007669"/>
    <property type="project" value="UniProtKB-UniRule"/>
</dbReference>
<dbReference type="GO" id="GO:0006426">
    <property type="term" value="P:glycyl-tRNA aminoacylation"/>
    <property type="evidence" value="ECO:0007669"/>
    <property type="project" value="UniProtKB-UniRule"/>
</dbReference>
<dbReference type="CDD" id="cd00733">
    <property type="entry name" value="GlyRS_alpha_core"/>
    <property type="match status" value="1"/>
</dbReference>
<dbReference type="FunFam" id="3.30.930.10:FF:000006">
    <property type="entry name" value="Glycine--tRNA ligase alpha subunit"/>
    <property type="match status" value="1"/>
</dbReference>
<dbReference type="Gene3D" id="3.30.930.10">
    <property type="entry name" value="Bira Bifunctional Protein, Domain 2"/>
    <property type="match status" value="1"/>
</dbReference>
<dbReference type="Gene3D" id="1.20.58.180">
    <property type="entry name" value="Class II aaRS and biotin synthetases, domain 2"/>
    <property type="match status" value="1"/>
</dbReference>
<dbReference type="HAMAP" id="MF_00254">
    <property type="entry name" value="Gly_tRNA_synth_alpha"/>
    <property type="match status" value="1"/>
</dbReference>
<dbReference type="InterPro" id="IPR045864">
    <property type="entry name" value="aa-tRNA-synth_II/BPL/LPL"/>
</dbReference>
<dbReference type="InterPro" id="IPR006194">
    <property type="entry name" value="Gly-tRNA-synth_heterodimer"/>
</dbReference>
<dbReference type="InterPro" id="IPR002310">
    <property type="entry name" value="Gly-tRNA_ligase_asu"/>
</dbReference>
<dbReference type="NCBIfam" id="TIGR00388">
    <property type="entry name" value="glyQ"/>
    <property type="match status" value="1"/>
</dbReference>
<dbReference type="NCBIfam" id="NF006827">
    <property type="entry name" value="PRK09348.1"/>
    <property type="match status" value="1"/>
</dbReference>
<dbReference type="PANTHER" id="PTHR30075:SF2">
    <property type="entry name" value="GLYCINE--TRNA LIGASE, CHLOROPLASTIC_MITOCHONDRIAL 2"/>
    <property type="match status" value="1"/>
</dbReference>
<dbReference type="PANTHER" id="PTHR30075">
    <property type="entry name" value="GLYCYL-TRNA SYNTHETASE"/>
    <property type="match status" value="1"/>
</dbReference>
<dbReference type="Pfam" id="PF02091">
    <property type="entry name" value="tRNA-synt_2e"/>
    <property type="match status" value="1"/>
</dbReference>
<dbReference type="PRINTS" id="PR01044">
    <property type="entry name" value="TRNASYNTHGA"/>
</dbReference>
<dbReference type="SUPFAM" id="SSF55681">
    <property type="entry name" value="Class II aaRS and biotin synthetases"/>
    <property type="match status" value="1"/>
</dbReference>
<dbReference type="PROSITE" id="PS50861">
    <property type="entry name" value="AA_TRNA_LIGASE_II_GLYAB"/>
    <property type="match status" value="1"/>
</dbReference>
<accession>B9MCM3</accession>